<accession>B1M6P5</accession>
<comment type="catalytic activity">
    <reaction evidence="1">
        <text>tRNA(Phe) + L-phenylalanine + ATP = L-phenylalanyl-tRNA(Phe) + AMP + diphosphate + H(+)</text>
        <dbReference type="Rhea" id="RHEA:19413"/>
        <dbReference type="Rhea" id="RHEA-COMP:9668"/>
        <dbReference type="Rhea" id="RHEA-COMP:9699"/>
        <dbReference type="ChEBI" id="CHEBI:15378"/>
        <dbReference type="ChEBI" id="CHEBI:30616"/>
        <dbReference type="ChEBI" id="CHEBI:33019"/>
        <dbReference type="ChEBI" id="CHEBI:58095"/>
        <dbReference type="ChEBI" id="CHEBI:78442"/>
        <dbReference type="ChEBI" id="CHEBI:78531"/>
        <dbReference type="ChEBI" id="CHEBI:456215"/>
        <dbReference type="EC" id="6.1.1.20"/>
    </reaction>
</comment>
<comment type="cofactor">
    <cofactor evidence="1">
        <name>Mg(2+)</name>
        <dbReference type="ChEBI" id="CHEBI:18420"/>
    </cofactor>
    <text evidence="1">Binds 2 magnesium ions per tetramer.</text>
</comment>
<comment type="subunit">
    <text evidence="1">Tetramer of two alpha and two beta subunits.</text>
</comment>
<comment type="subcellular location">
    <subcellularLocation>
        <location evidence="1">Cytoplasm</location>
    </subcellularLocation>
</comment>
<comment type="similarity">
    <text evidence="1">Belongs to the class-II aminoacyl-tRNA synthetase family. Phe-tRNA synthetase alpha subunit type 1 subfamily.</text>
</comment>
<evidence type="ECO:0000255" key="1">
    <source>
        <dbReference type="HAMAP-Rule" id="MF_00281"/>
    </source>
</evidence>
<feature type="chain" id="PRO_1000114891" description="Phenylalanine--tRNA ligase alpha subunit">
    <location>
        <begin position="1"/>
        <end position="360"/>
    </location>
</feature>
<feature type="binding site" evidence="1">
    <location>
        <position position="260"/>
    </location>
    <ligand>
        <name>Mg(2+)</name>
        <dbReference type="ChEBI" id="CHEBI:18420"/>
        <note>shared with beta subunit</note>
    </ligand>
</feature>
<organism>
    <name type="scientific">Methylobacterium radiotolerans (strain ATCC 27329 / DSM 1819 / JCM 2831 / NBRC 15690 / NCIMB 10815 / 0-1)</name>
    <dbReference type="NCBI Taxonomy" id="426355"/>
    <lineage>
        <taxon>Bacteria</taxon>
        <taxon>Pseudomonadati</taxon>
        <taxon>Pseudomonadota</taxon>
        <taxon>Alphaproteobacteria</taxon>
        <taxon>Hyphomicrobiales</taxon>
        <taxon>Methylobacteriaceae</taxon>
        <taxon>Methylobacterium</taxon>
    </lineage>
</organism>
<keyword id="KW-0030">Aminoacyl-tRNA synthetase</keyword>
<keyword id="KW-0067">ATP-binding</keyword>
<keyword id="KW-0963">Cytoplasm</keyword>
<keyword id="KW-0436">Ligase</keyword>
<keyword id="KW-0460">Magnesium</keyword>
<keyword id="KW-0479">Metal-binding</keyword>
<keyword id="KW-0547">Nucleotide-binding</keyword>
<keyword id="KW-0648">Protein biosynthesis</keyword>
<reference key="1">
    <citation type="submission" date="2008-03" db="EMBL/GenBank/DDBJ databases">
        <title>Complete sequence of chromosome of Methylobacterium radiotolerans JCM 2831.</title>
        <authorList>
            <consortium name="US DOE Joint Genome Institute"/>
            <person name="Copeland A."/>
            <person name="Lucas S."/>
            <person name="Lapidus A."/>
            <person name="Glavina del Rio T."/>
            <person name="Dalin E."/>
            <person name="Tice H."/>
            <person name="Bruce D."/>
            <person name="Goodwin L."/>
            <person name="Pitluck S."/>
            <person name="Kiss H."/>
            <person name="Brettin T."/>
            <person name="Detter J.C."/>
            <person name="Han C."/>
            <person name="Kuske C.R."/>
            <person name="Schmutz J."/>
            <person name="Larimer F."/>
            <person name="Land M."/>
            <person name="Hauser L."/>
            <person name="Kyrpides N."/>
            <person name="Mikhailova N."/>
            <person name="Marx C.J."/>
            <person name="Richardson P."/>
        </authorList>
    </citation>
    <scope>NUCLEOTIDE SEQUENCE [LARGE SCALE GENOMIC DNA]</scope>
    <source>
        <strain>ATCC 27329 / DSM 1819 / JCM 2831 / NBRC 15690 / NCIMB 10815 / 0-1</strain>
    </source>
</reference>
<name>SYFA_METRJ</name>
<protein>
    <recommendedName>
        <fullName evidence="1">Phenylalanine--tRNA ligase alpha subunit</fullName>
        <ecNumber evidence="1">6.1.1.20</ecNumber>
    </recommendedName>
    <alternativeName>
        <fullName evidence="1">Phenylalanyl-tRNA synthetase alpha subunit</fullName>
        <shortName evidence="1">PheRS</shortName>
    </alternativeName>
</protein>
<gene>
    <name evidence="1" type="primary">pheS</name>
    <name type="ordered locus">Mrad2831_3154</name>
</gene>
<proteinExistence type="inferred from homology"/>
<sequence length="360" mass="39844">MTDLDTLERDLLAQVGAASDEAALDAVRVAALGKKGSVSDLLKTLGSMTPEERKERGPLINGLRDRVQGAVTARKTELAEAALEARLASERVDVTLPVREAPEVRGRIHPISQVIDEITAIFADMGFAVAEGPDIETDELNFTALNFPPGHPAREMHDTFFLAPDRDGKRKVLRTHTSPVQVRTMRAQTPPIRVIIPGRTYRHDSDQTHTPMFHQVEGLVIDTSANIANLKWVLEEFCKAFFEVDGVKMRFRPSFFPFTEPSAEVDIQCSRKGGEIRFGEGDDWLEILGCGMVHPNVLRNCGLDPDAVQGFAFGVGIDRIAMLKYGMPDLRPFFEADVRWLDHYGFRPLDVPSLVGGLTA</sequence>
<dbReference type="EC" id="6.1.1.20" evidence="1"/>
<dbReference type="EMBL" id="CP001001">
    <property type="protein sequence ID" value="ACB25136.1"/>
    <property type="molecule type" value="Genomic_DNA"/>
</dbReference>
<dbReference type="RefSeq" id="WP_012320100.1">
    <property type="nucleotide sequence ID" value="NC_010505.1"/>
</dbReference>
<dbReference type="SMR" id="B1M6P5"/>
<dbReference type="STRING" id="426355.Mrad2831_3154"/>
<dbReference type="GeneID" id="6139201"/>
<dbReference type="KEGG" id="mrd:Mrad2831_3154"/>
<dbReference type="eggNOG" id="COG0016">
    <property type="taxonomic scope" value="Bacteria"/>
</dbReference>
<dbReference type="HOGENOM" id="CLU_025086_0_1_5"/>
<dbReference type="OrthoDB" id="9800719at2"/>
<dbReference type="Proteomes" id="UP000006589">
    <property type="component" value="Chromosome"/>
</dbReference>
<dbReference type="GO" id="GO:0005737">
    <property type="term" value="C:cytoplasm"/>
    <property type="evidence" value="ECO:0007669"/>
    <property type="project" value="UniProtKB-SubCell"/>
</dbReference>
<dbReference type="GO" id="GO:0005524">
    <property type="term" value="F:ATP binding"/>
    <property type="evidence" value="ECO:0007669"/>
    <property type="project" value="UniProtKB-UniRule"/>
</dbReference>
<dbReference type="GO" id="GO:0000287">
    <property type="term" value="F:magnesium ion binding"/>
    <property type="evidence" value="ECO:0007669"/>
    <property type="project" value="UniProtKB-UniRule"/>
</dbReference>
<dbReference type="GO" id="GO:0004826">
    <property type="term" value="F:phenylalanine-tRNA ligase activity"/>
    <property type="evidence" value="ECO:0007669"/>
    <property type="project" value="UniProtKB-UniRule"/>
</dbReference>
<dbReference type="GO" id="GO:0000049">
    <property type="term" value="F:tRNA binding"/>
    <property type="evidence" value="ECO:0007669"/>
    <property type="project" value="InterPro"/>
</dbReference>
<dbReference type="GO" id="GO:0006432">
    <property type="term" value="P:phenylalanyl-tRNA aminoacylation"/>
    <property type="evidence" value="ECO:0007669"/>
    <property type="project" value="UniProtKB-UniRule"/>
</dbReference>
<dbReference type="CDD" id="cd00496">
    <property type="entry name" value="PheRS_alpha_core"/>
    <property type="match status" value="1"/>
</dbReference>
<dbReference type="FunFam" id="3.30.930.10:FF:000003">
    <property type="entry name" value="Phenylalanine--tRNA ligase alpha subunit"/>
    <property type="match status" value="1"/>
</dbReference>
<dbReference type="Gene3D" id="3.30.930.10">
    <property type="entry name" value="Bira Bifunctional Protein, Domain 2"/>
    <property type="match status" value="1"/>
</dbReference>
<dbReference type="HAMAP" id="MF_00281">
    <property type="entry name" value="Phe_tRNA_synth_alpha1"/>
    <property type="match status" value="1"/>
</dbReference>
<dbReference type="InterPro" id="IPR006195">
    <property type="entry name" value="aa-tRNA-synth_II"/>
</dbReference>
<dbReference type="InterPro" id="IPR045864">
    <property type="entry name" value="aa-tRNA-synth_II/BPL/LPL"/>
</dbReference>
<dbReference type="InterPro" id="IPR004529">
    <property type="entry name" value="Phe-tRNA-synth_IIc_asu"/>
</dbReference>
<dbReference type="InterPro" id="IPR004188">
    <property type="entry name" value="Phe-tRNA_ligase_II_N"/>
</dbReference>
<dbReference type="InterPro" id="IPR022911">
    <property type="entry name" value="Phe_tRNA_ligase_alpha1_bac"/>
</dbReference>
<dbReference type="InterPro" id="IPR002319">
    <property type="entry name" value="Phenylalanyl-tRNA_Synthase"/>
</dbReference>
<dbReference type="InterPro" id="IPR010978">
    <property type="entry name" value="tRNA-bd_arm"/>
</dbReference>
<dbReference type="NCBIfam" id="TIGR00468">
    <property type="entry name" value="pheS"/>
    <property type="match status" value="1"/>
</dbReference>
<dbReference type="PANTHER" id="PTHR11538:SF41">
    <property type="entry name" value="PHENYLALANINE--TRNA LIGASE, MITOCHONDRIAL"/>
    <property type="match status" value="1"/>
</dbReference>
<dbReference type="PANTHER" id="PTHR11538">
    <property type="entry name" value="PHENYLALANYL-TRNA SYNTHETASE"/>
    <property type="match status" value="1"/>
</dbReference>
<dbReference type="Pfam" id="PF02912">
    <property type="entry name" value="Phe_tRNA-synt_N"/>
    <property type="match status" value="1"/>
</dbReference>
<dbReference type="Pfam" id="PF01409">
    <property type="entry name" value="tRNA-synt_2d"/>
    <property type="match status" value="1"/>
</dbReference>
<dbReference type="SUPFAM" id="SSF55681">
    <property type="entry name" value="Class II aaRS and biotin synthetases"/>
    <property type="match status" value="1"/>
</dbReference>
<dbReference type="SUPFAM" id="SSF46589">
    <property type="entry name" value="tRNA-binding arm"/>
    <property type="match status" value="1"/>
</dbReference>
<dbReference type="PROSITE" id="PS50862">
    <property type="entry name" value="AA_TRNA_LIGASE_II"/>
    <property type="match status" value="1"/>
</dbReference>